<sequence length="274" mass="29853">MQQLQNVIESAFERRADITPANVDTVTREAVNQVISLLDSGALRVAEKIDGQWVTHQWLKKAVLLSFRINDNQVIDGAESRYFDKVPMKFADYDEARFVKEGFRVVPPAAVRQGAFIARNTVLMPSYVNIGAYVDEGSMVDTWATVGSCAQIGKNVHLSGGVGIGGVLEPLQANPTIIEDNCFIGARSEVVEGVIVEEGSVISMGVYIGQSTRIYDRETGEVHYGRVPAGSVVVSGNLPSKDGKYSLYCAVIVKKVDAKTRSKVGINELLRTID</sequence>
<gene>
    <name evidence="1" type="primary">dapD</name>
    <name type="ordered locus">Ent638_0704</name>
</gene>
<name>DAPD_ENT38</name>
<accession>A4W6R1</accession>
<feature type="chain" id="PRO_1000062279" description="2,3,4,5-tetrahydropyridine-2,6-dicarboxylate N-succinyltransferase">
    <location>
        <begin position="1"/>
        <end position="274"/>
    </location>
</feature>
<feature type="binding site" evidence="1">
    <location>
        <position position="104"/>
    </location>
    <ligand>
        <name>substrate</name>
    </ligand>
</feature>
<feature type="binding site" evidence="1">
    <location>
        <position position="141"/>
    </location>
    <ligand>
        <name>substrate</name>
    </ligand>
</feature>
<comment type="catalytic activity">
    <reaction evidence="1">
        <text>(S)-2,3,4,5-tetrahydrodipicolinate + succinyl-CoA + H2O = (S)-2-succinylamino-6-oxoheptanedioate + CoA</text>
        <dbReference type="Rhea" id="RHEA:17325"/>
        <dbReference type="ChEBI" id="CHEBI:15377"/>
        <dbReference type="ChEBI" id="CHEBI:15685"/>
        <dbReference type="ChEBI" id="CHEBI:16845"/>
        <dbReference type="ChEBI" id="CHEBI:57287"/>
        <dbReference type="ChEBI" id="CHEBI:57292"/>
        <dbReference type="EC" id="2.3.1.117"/>
    </reaction>
</comment>
<comment type="pathway">
    <text evidence="1">Amino-acid biosynthesis; L-lysine biosynthesis via DAP pathway; LL-2,6-diaminopimelate from (S)-tetrahydrodipicolinate (succinylase route): step 1/3.</text>
</comment>
<comment type="subunit">
    <text evidence="1">Homotrimer.</text>
</comment>
<comment type="subcellular location">
    <subcellularLocation>
        <location evidence="1">Cytoplasm</location>
    </subcellularLocation>
</comment>
<comment type="similarity">
    <text evidence="1">Belongs to the transferase hexapeptide repeat family.</text>
</comment>
<organism>
    <name type="scientific">Enterobacter sp. (strain 638)</name>
    <dbReference type="NCBI Taxonomy" id="399742"/>
    <lineage>
        <taxon>Bacteria</taxon>
        <taxon>Pseudomonadati</taxon>
        <taxon>Pseudomonadota</taxon>
        <taxon>Gammaproteobacteria</taxon>
        <taxon>Enterobacterales</taxon>
        <taxon>Enterobacteriaceae</taxon>
        <taxon>Enterobacter</taxon>
    </lineage>
</organism>
<reference key="1">
    <citation type="journal article" date="2010" name="PLoS Genet.">
        <title>Genome sequence of the plant growth promoting endophytic bacterium Enterobacter sp. 638.</title>
        <authorList>
            <person name="Taghavi S."/>
            <person name="van der Lelie D."/>
            <person name="Hoffman A."/>
            <person name="Zhang Y.B."/>
            <person name="Walla M.D."/>
            <person name="Vangronsveld J."/>
            <person name="Newman L."/>
            <person name="Monchy S."/>
        </authorList>
    </citation>
    <scope>NUCLEOTIDE SEQUENCE [LARGE SCALE GENOMIC DNA]</scope>
    <source>
        <strain>638</strain>
    </source>
</reference>
<proteinExistence type="inferred from homology"/>
<evidence type="ECO:0000255" key="1">
    <source>
        <dbReference type="HAMAP-Rule" id="MF_00811"/>
    </source>
</evidence>
<protein>
    <recommendedName>
        <fullName evidence="1">2,3,4,5-tetrahydropyridine-2,6-dicarboxylate N-succinyltransferase</fullName>
        <ecNumber evidence="1">2.3.1.117</ecNumber>
    </recommendedName>
    <alternativeName>
        <fullName evidence="1">Tetrahydrodipicolinate N-succinyltransferase</fullName>
        <shortName evidence="1">THDP succinyltransferase</shortName>
        <shortName evidence="1">THP succinyltransferase</shortName>
        <shortName evidence="1">Tetrahydropicolinate succinylase</shortName>
    </alternativeName>
</protein>
<dbReference type="EC" id="2.3.1.117" evidence="1"/>
<dbReference type="EMBL" id="CP000653">
    <property type="protein sequence ID" value="ABP59391.1"/>
    <property type="molecule type" value="Genomic_DNA"/>
</dbReference>
<dbReference type="RefSeq" id="WP_012016112.1">
    <property type="nucleotide sequence ID" value="NC_009436.1"/>
</dbReference>
<dbReference type="SMR" id="A4W6R1"/>
<dbReference type="STRING" id="399742.Ent638_0704"/>
<dbReference type="GeneID" id="93307878"/>
<dbReference type="KEGG" id="ent:Ent638_0704"/>
<dbReference type="eggNOG" id="COG2171">
    <property type="taxonomic scope" value="Bacteria"/>
</dbReference>
<dbReference type="HOGENOM" id="CLU_050859_0_1_6"/>
<dbReference type="OrthoDB" id="9775362at2"/>
<dbReference type="UniPathway" id="UPA00034">
    <property type="reaction ID" value="UER00019"/>
</dbReference>
<dbReference type="Proteomes" id="UP000000230">
    <property type="component" value="Chromosome"/>
</dbReference>
<dbReference type="GO" id="GO:0005737">
    <property type="term" value="C:cytoplasm"/>
    <property type="evidence" value="ECO:0007669"/>
    <property type="project" value="UniProtKB-SubCell"/>
</dbReference>
<dbReference type="GO" id="GO:0008666">
    <property type="term" value="F:2,3,4,5-tetrahydropyridine-2,6-dicarboxylate N-succinyltransferase activity"/>
    <property type="evidence" value="ECO:0007669"/>
    <property type="project" value="UniProtKB-UniRule"/>
</dbReference>
<dbReference type="GO" id="GO:0016779">
    <property type="term" value="F:nucleotidyltransferase activity"/>
    <property type="evidence" value="ECO:0007669"/>
    <property type="project" value="TreeGrafter"/>
</dbReference>
<dbReference type="GO" id="GO:0019877">
    <property type="term" value="P:diaminopimelate biosynthetic process"/>
    <property type="evidence" value="ECO:0007669"/>
    <property type="project" value="UniProtKB-UniRule"/>
</dbReference>
<dbReference type="GO" id="GO:0009089">
    <property type="term" value="P:lysine biosynthetic process via diaminopimelate"/>
    <property type="evidence" value="ECO:0007669"/>
    <property type="project" value="UniProtKB-UniRule"/>
</dbReference>
<dbReference type="CDD" id="cd03350">
    <property type="entry name" value="LbH_THP_succinylT"/>
    <property type="match status" value="1"/>
</dbReference>
<dbReference type="FunFam" id="2.160.10.10:FF:000004">
    <property type="entry name" value="2,3,4,5-tetrahydropyridine-2,6-dicarboxylate N-succinyltransferase"/>
    <property type="match status" value="1"/>
</dbReference>
<dbReference type="Gene3D" id="2.160.10.10">
    <property type="entry name" value="Hexapeptide repeat proteins"/>
    <property type="match status" value="1"/>
</dbReference>
<dbReference type="Gene3D" id="1.10.166.10">
    <property type="entry name" value="Tetrahydrodipicolinate-N-succinyltransferase, N-terminal domain"/>
    <property type="match status" value="1"/>
</dbReference>
<dbReference type="HAMAP" id="MF_00811">
    <property type="entry name" value="DapD"/>
    <property type="match status" value="1"/>
</dbReference>
<dbReference type="InterPro" id="IPR005664">
    <property type="entry name" value="DapD_Trfase_Hexpep_rpt_fam"/>
</dbReference>
<dbReference type="InterPro" id="IPR001451">
    <property type="entry name" value="Hexapep"/>
</dbReference>
<dbReference type="InterPro" id="IPR018357">
    <property type="entry name" value="Hexapep_transf_CS"/>
</dbReference>
<dbReference type="InterPro" id="IPR023180">
    <property type="entry name" value="THP_succinylTrfase_dom1"/>
</dbReference>
<dbReference type="InterPro" id="IPR037133">
    <property type="entry name" value="THP_succinylTrfase_N_sf"/>
</dbReference>
<dbReference type="InterPro" id="IPR011004">
    <property type="entry name" value="Trimer_LpxA-like_sf"/>
</dbReference>
<dbReference type="NCBIfam" id="TIGR00965">
    <property type="entry name" value="dapD"/>
    <property type="match status" value="1"/>
</dbReference>
<dbReference type="NCBIfam" id="NF008808">
    <property type="entry name" value="PRK11830.1"/>
    <property type="match status" value="1"/>
</dbReference>
<dbReference type="PANTHER" id="PTHR19136:SF52">
    <property type="entry name" value="2,3,4,5-TETRAHYDROPYRIDINE-2,6-DICARBOXYLATE N-SUCCINYLTRANSFERASE"/>
    <property type="match status" value="1"/>
</dbReference>
<dbReference type="PANTHER" id="PTHR19136">
    <property type="entry name" value="MOLYBDENUM COFACTOR GUANYLYLTRANSFERASE"/>
    <property type="match status" value="1"/>
</dbReference>
<dbReference type="Pfam" id="PF14602">
    <property type="entry name" value="Hexapep_2"/>
    <property type="match status" value="1"/>
</dbReference>
<dbReference type="Pfam" id="PF14805">
    <property type="entry name" value="THDPS_N_2"/>
    <property type="match status" value="1"/>
</dbReference>
<dbReference type="SUPFAM" id="SSF51161">
    <property type="entry name" value="Trimeric LpxA-like enzymes"/>
    <property type="match status" value="1"/>
</dbReference>
<dbReference type="PROSITE" id="PS00101">
    <property type="entry name" value="HEXAPEP_TRANSFERASES"/>
    <property type="match status" value="1"/>
</dbReference>
<keyword id="KW-0012">Acyltransferase</keyword>
<keyword id="KW-0028">Amino-acid biosynthesis</keyword>
<keyword id="KW-0963">Cytoplasm</keyword>
<keyword id="KW-0220">Diaminopimelate biosynthesis</keyword>
<keyword id="KW-0457">Lysine biosynthesis</keyword>
<keyword id="KW-0677">Repeat</keyword>
<keyword id="KW-0808">Transferase</keyword>